<organism>
    <name type="scientific">Pseudomonas fluorescens (strain ATCC BAA-477 / NRRL B-23932 / Pf-5)</name>
    <dbReference type="NCBI Taxonomy" id="220664"/>
    <lineage>
        <taxon>Bacteria</taxon>
        <taxon>Pseudomonadati</taxon>
        <taxon>Pseudomonadota</taxon>
        <taxon>Gammaproteobacteria</taxon>
        <taxon>Pseudomonadales</taxon>
        <taxon>Pseudomonadaceae</taxon>
        <taxon>Pseudomonas</taxon>
    </lineage>
</organism>
<sequence>MRLIRMLLLPVLAVTTLSAHADPKDVARLTQLLEKSQTLTARFSQLTLDGSGTQLQETAGEMSLQRPGLFYWHTDAPQEQLMVSDGQKVSLWDPDLEQVTIKKLDQRLTQTPALLLSGDVSKISESFDITSKEAGGVMDFTLKPKTRDTLFDSLRLSFRNGMINDMQLIDSVGQRTNILFTGVKANEAIPASKFKFDIPKGADVIQE</sequence>
<accession>Q4K9V4</accession>
<protein>
    <recommendedName>
        <fullName evidence="1">Outer-membrane lipoprotein carrier protein</fullName>
    </recommendedName>
</protein>
<feature type="signal peptide" evidence="1">
    <location>
        <begin position="1"/>
        <end position="21"/>
    </location>
</feature>
<feature type="chain" id="PRO_1000005704" description="Outer-membrane lipoprotein carrier protein">
    <location>
        <begin position="22"/>
        <end position="207"/>
    </location>
</feature>
<reference key="1">
    <citation type="journal article" date="2005" name="Nat. Biotechnol.">
        <title>Complete genome sequence of the plant commensal Pseudomonas fluorescens Pf-5.</title>
        <authorList>
            <person name="Paulsen I.T."/>
            <person name="Press C.M."/>
            <person name="Ravel J."/>
            <person name="Kobayashi D.Y."/>
            <person name="Myers G.S.A."/>
            <person name="Mavrodi D.V."/>
            <person name="DeBoy R.T."/>
            <person name="Seshadri R."/>
            <person name="Ren Q."/>
            <person name="Madupu R."/>
            <person name="Dodson R.J."/>
            <person name="Durkin A.S."/>
            <person name="Brinkac L.M."/>
            <person name="Daugherty S.C."/>
            <person name="Sullivan S.A."/>
            <person name="Rosovitz M.J."/>
            <person name="Gwinn M.L."/>
            <person name="Zhou L."/>
            <person name="Schneider D.J."/>
            <person name="Cartinhour S.W."/>
            <person name="Nelson W.C."/>
            <person name="Weidman J."/>
            <person name="Watkins K."/>
            <person name="Tran K."/>
            <person name="Khouri H."/>
            <person name="Pierson E.A."/>
            <person name="Pierson L.S. III"/>
            <person name="Thomashow L.S."/>
            <person name="Loper J.E."/>
        </authorList>
    </citation>
    <scope>NUCLEOTIDE SEQUENCE [LARGE SCALE GENOMIC DNA]</scope>
    <source>
        <strain>ATCC BAA-477 / NRRL B-23932 / Pf-5</strain>
    </source>
</reference>
<name>LOLA_PSEF5</name>
<gene>
    <name evidence="1" type="primary">lolA</name>
    <name type="ordered locus">PFL_3879</name>
</gene>
<proteinExistence type="inferred from homology"/>
<comment type="function">
    <text evidence="1">Participates in the translocation of lipoproteins from the inner membrane to the outer membrane. Only forms a complex with a lipoprotein if the residue after the N-terminal Cys is not an aspartate (The Asp acts as a targeting signal to indicate that the lipoprotein should stay in the inner membrane).</text>
</comment>
<comment type="subunit">
    <text evidence="1">Monomer.</text>
</comment>
<comment type="subcellular location">
    <subcellularLocation>
        <location evidence="1">Periplasm</location>
    </subcellularLocation>
</comment>
<comment type="similarity">
    <text evidence="1">Belongs to the LolA family.</text>
</comment>
<dbReference type="EMBL" id="CP000076">
    <property type="protein sequence ID" value="AAY93143.1"/>
    <property type="molecule type" value="Genomic_DNA"/>
</dbReference>
<dbReference type="RefSeq" id="WP_011062167.1">
    <property type="nucleotide sequence ID" value="NC_004129.6"/>
</dbReference>
<dbReference type="SMR" id="Q4K9V4"/>
<dbReference type="STRING" id="220664.PFL_3879"/>
<dbReference type="GeneID" id="57476946"/>
<dbReference type="KEGG" id="pfl:PFL_3879"/>
<dbReference type="eggNOG" id="COG2834">
    <property type="taxonomic scope" value="Bacteria"/>
</dbReference>
<dbReference type="HOGENOM" id="CLU_087560_0_0_6"/>
<dbReference type="Proteomes" id="UP000008540">
    <property type="component" value="Chromosome"/>
</dbReference>
<dbReference type="GO" id="GO:0030288">
    <property type="term" value="C:outer membrane-bounded periplasmic space"/>
    <property type="evidence" value="ECO:0007669"/>
    <property type="project" value="TreeGrafter"/>
</dbReference>
<dbReference type="GO" id="GO:0044874">
    <property type="term" value="P:lipoprotein localization to outer membrane"/>
    <property type="evidence" value="ECO:0007669"/>
    <property type="project" value="UniProtKB-UniRule"/>
</dbReference>
<dbReference type="GO" id="GO:0042953">
    <property type="term" value="P:lipoprotein transport"/>
    <property type="evidence" value="ECO:0007669"/>
    <property type="project" value="InterPro"/>
</dbReference>
<dbReference type="CDD" id="cd16325">
    <property type="entry name" value="LolA"/>
    <property type="match status" value="1"/>
</dbReference>
<dbReference type="Gene3D" id="2.50.20.10">
    <property type="entry name" value="Lipoprotein localisation LolA/LolB/LppX"/>
    <property type="match status" value="1"/>
</dbReference>
<dbReference type="HAMAP" id="MF_00240">
    <property type="entry name" value="LolA"/>
    <property type="match status" value="1"/>
</dbReference>
<dbReference type="InterPro" id="IPR029046">
    <property type="entry name" value="LolA/LolB/LppX"/>
</dbReference>
<dbReference type="InterPro" id="IPR004564">
    <property type="entry name" value="OM_lipoprot_carrier_LolA-like"/>
</dbReference>
<dbReference type="InterPro" id="IPR018323">
    <property type="entry name" value="OM_lipoprot_carrier_LolA_Pbac"/>
</dbReference>
<dbReference type="NCBIfam" id="TIGR00547">
    <property type="entry name" value="lolA"/>
    <property type="match status" value="1"/>
</dbReference>
<dbReference type="PANTHER" id="PTHR35869">
    <property type="entry name" value="OUTER-MEMBRANE LIPOPROTEIN CARRIER PROTEIN"/>
    <property type="match status" value="1"/>
</dbReference>
<dbReference type="PANTHER" id="PTHR35869:SF1">
    <property type="entry name" value="OUTER-MEMBRANE LIPOPROTEIN CARRIER PROTEIN"/>
    <property type="match status" value="1"/>
</dbReference>
<dbReference type="Pfam" id="PF03548">
    <property type="entry name" value="LolA"/>
    <property type="match status" value="1"/>
</dbReference>
<dbReference type="SUPFAM" id="SSF89392">
    <property type="entry name" value="Prokaryotic lipoproteins and lipoprotein localization factors"/>
    <property type="match status" value="1"/>
</dbReference>
<keyword id="KW-0143">Chaperone</keyword>
<keyword id="KW-0574">Periplasm</keyword>
<keyword id="KW-0653">Protein transport</keyword>
<keyword id="KW-0732">Signal</keyword>
<keyword id="KW-0813">Transport</keyword>
<evidence type="ECO:0000255" key="1">
    <source>
        <dbReference type="HAMAP-Rule" id="MF_00240"/>
    </source>
</evidence>